<dbReference type="EC" id="2.8.4.3" evidence="1"/>
<dbReference type="EMBL" id="CP000325">
    <property type="protein sequence ID" value="ABL05556.1"/>
    <property type="molecule type" value="Genomic_DNA"/>
</dbReference>
<dbReference type="SMR" id="A0PT87"/>
<dbReference type="KEGG" id="mul:MUL_3378"/>
<dbReference type="eggNOG" id="COG0621">
    <property type="taxonomic scope" value="Bacteria"/>
</dbReference>
<dbReference type="HOGENOM" id="CLU_018697_2_2_11"/>
<dbReference type="Proteomes" id="UP000000765">
    <property type="component" value="Chromosome"/>
</dbReference>
<dbReference type="GO" id="GO:0005829">
    <property type="term" value="C:cytosol"/>
    <property type="evidence" value="ECO:0007669"/>
    <property type="project" value="TreeGrafter"/>
</dbReference>
<dbReference type="GO" id="GO:0051539">
    <property type="term" value="F:4 iron, 4 sulfur cluster binding"/>
    <property type="evidence" value="ECO:0007669"/>
    <property type="project" value="UniProtKB-UniRule"/>
</dbReference>
<dbReference type="GO" id="GO:0046872">
    <property type="term" value="F:metal ion binding"/>
    <property type="evidence" value="ECO:0007669"/>
    <property type="project" value="UniProtKB-KW"/>
</dbReference>
<dbReference type="GO" id="GO:0035597">
    <property type="term" value="F:N6-isopentenyladenosine methylthiotransferase activity"/>
    <property type="evidence" value="ECO:0007669"/>
    <property type="project" value="TreeGrafter"/>
</dbReference>
<dbReference type="CDD" id="cd01335">
    <property type="entry name" value="Radical_SAM"/>
    <property type="match status" value="1"/>
</dbReference>
<dbReference type="FunFam" id="3.40.50.12160:FF:000003">
    <property type="entry name" value="CDK5 regulatory subunit-associated protein 1"/>
    <property type="match status" value="1"/>
</dbReference>
<dbReference type="FunFam" id="3.80.30.20:FF:000001">
    <property type="entry name" value="tRNA-2-methylthio-N(6)-dimethylallyladenosine synthase 2"/>
    <property type="match status" value="1"/>
</dbReference>
<dbReference type="Gene3D" id="3.40.50.12160">
    <property type="entry name" value="Methylthiotransferase, N-terminal domain"/>
    <property type="match status" value="1"/>
</dbReference>
<dbReference type="Gene3D" id="3.80.30.20">
    <property type="entry name" value="tm_1862 like domain"/>
    <property type="match status" value="1"/>
</dbReference>
<dbReference type="HAMAP" id="MF_01864">
    <property type="entry name" value="tRNA_metthiotr_MiaB"/>
    <property type="match status" value="1"/>
</dbReference>
<dbReference type="InterPro" id="IPR006638">
    <property type="entry name" value="Elp3/MiaA/NifB-like_rSAM"/>
</dbReference>
<dbReference type="InterPro" id="IPR005839">
    <property type="entry name" value="Methylthiotransferase"/>
</dbReference>
<dbReference type="InterPro" id="IPR020612">
    <property type="entry name" value="Methylthiotransferase_CS"/>
</dbReference>
<dbReference type="InterPro" id="IPR013848">
    <property type="entry name" value="Methylthiotransferase_N"/>
</dbReference>
<dbReference type="InterPro" id="IPR038135">
    <property type="entry name" value="Methylthiotransferase_N_sf"/>
</dbReference>
<dbReference type="InterPro" id="IPR006463">
    <property type="entry name" value="MiaB_methiolase"/>
</dbReference>
<dbReference type="InterPro" id="IPR007197">
    <property type="entry name" value="rSAM"/>
</dbReference>
<dbReference type="InterPro" id="IPR023404">
    <property type="entry name" value="rSAM_horseshoe"/>
</dbReference>
<dbReference type="InterPro" id="IPR002792">
    <property type="entry name" value="TRAM_dom"/>
</dbReference>
<dbReference type="NCBIfam" id="TIGR01574">
    <property type="entry name" value="miaB-methiolase"/>
    <property type="match status" value="1"/>
</dbReference>
<dbReference type="NCBIfam" id="TIGR00089">
    <property type="entry name" value="MiaB/RimO family radical SAM methylthiotransferase"/>
    <property type="match status" value="1"/>
</dbReference>
<dbReference type="PANTHER" id="PTHR43020">
    <property type="entry name" value="CDK5 REGULATORY SUBUNIT-ASSOCIATED PROTEIN 1"/>
    <property type="match status" value="1"/>
</dbReference>
<dbReference type="PANTHER" id="PTHR43020:SF2">
    <property type="entry name" value="MITOCHONDRIAL TRNA METHYLTHIOTRANSFERASE CDK5RAP1"/>
    <property type="match status" value="1"/>
</dbReference>
<dbReference type="Pfam" id="PF04055">
    <property type="entry name" value="Radical_SAM"/>
    <property type="match status" value="1"/>
</dbReference>
<dbReference type="Pfam" id="PF00919">
    <property type="entry name" value="UPF0004"/>
    <property type="match status" value="1"/>
</dbReference>
<dbReference type="SFLD" id="SFLDF00273">
    <property type="entry name" value="(dimethylallyl)adenosine_tRNA"/>
    <property type="match status" value="1"/>
</dbReference>
<dbReference type="SFLD" id="SFLDG01082">
    <property type="entry name" value="B12-binding_domain_containing"/>
    <property type="match status" value="1"/>
</dbReference>
<dbReference type="SFLD" id="SFLDG01061">
    <property type="entry name" value="methylthiotransferase"/>
    <property type="match status" value="1"/>
</dbReference>
<dbReference type="SMART" id="SM00729">
    <property type="entry name" value="Elp3"/>
    <property type="match status" value="1"/>
</dbReference>
<dbReference type="SUPFAM" id="SSF102114">
    <property type="entry name" value="Radical SAM enzymes"/>
    <property type="match status" value="1"/>
</dbReference>
<dbReference type="PROSITE" id="PS51449">
    <property type="entry name" value="MTTASE_N"/>
    <property type="match status" value="1"/>
</dbReference>
<dbReference type="PROSITE" id="PS01278">
    <property type="entry name" value="MTTASE_RADICAL"/>
    <property type="match status" value="1"/>
</dbReference>
<dbReference type="PROSITE" id="PS51918">
    <property type="entry name" value="RADICAL_SAM"/>
    <property type="match status" value="1"/>
</dbReference>
<dbReference type="PROSITE" id="PS50926">
    <property type="entry name" value="TRAM"/>
    <property type="match status" value="1"/>
</dbReference>
<protein>
    <recommendedName>
        <fullName evidence="1">tRNA-2-methylthio-N(6)-dimethylallyladenosine synthase</fullName>
        <ecNumber evidence="1">2.8.4.3</ecNumber>
    </recommendedName>
    <alternativeName>
        <fullName evidence="1">(Dimethylallyl)adenosine tRNA methylthiotransferase MiaB</fullName>
    </alternativeName>
    <alternativeName>
        <fullName evidence="1">tRNA-i(6)A37 methylthiotransferase</fullName>
    </alternativeName>
</protein>
<gene>
    <name evidence="1" type="primary">miaB</name>
    <name type="ordered locus">MUL_3378</name>
</gene>
<organism>
    <name type="scientific">Mycobacterium ulcerans (strain Agy99)</name>
    <dbReference type="NCBI Taxonomy" id="362242"/>
    <lineage>
        <taxon>Bacteria</taxon>
        <taxon>Bacillati</taxon>
        <taxon>Actinomycetota</taxon>
        <taxon>Actinomycetes</taxon>
        <taxon>Mycobacteriales</taxon>
        <taxon>Mycobacteriaceae</taxon>
        <taxon>Mycobacterium</taxon>
        <taxon>Mycobacterium ulcerans group</taxon>
    </lineage>
</organism>
<keyword id="KW-0004">4Fe-4S</keyword>
<keyword id="KW-0963">Cytoplasm</keyword>
<keyword id="KW-0408">Iron</keyword>
<keyword id="KW-0411">Iron-sulfur</keyword>
<keyword id="KW-0479">Metal-binding</keyword>
<keyword id="KW-0949">S-adenosyl-L-methionine</keyword>
<keyword id="KW-0808">Transferase</keyword>
<keyword id="KW-0819">tRNA processing</keyword>
<proteinExistence type="inferred from homology"/>
<feature type="chain" id="PRO_0000374395" description="tRNA-2-methylthio-N(6)-dimethylallyladenosine synthase">
    <location>
        <begin position="1"/>
        <end position="532"/>
    </location>
</feature>
<feature type="domain" description="MTTase N-terminal" evidence="1">
    <location>
        <begin position="24"/>
        <end position="140"/>
    </location>
</feature>
<feature type="domain" description="Radical SAM core" evidence="2">
    <location>
        <begin position="163"/>
        <end position="399"/>
    </location>
</feature>
<feature type="domain" description="TRAM" evidence="1">
    <location>
        <begin position="402"/>
        <end position="470"/>
    </location>
</feature>
<feature type="region of interest" description="Disordered" evidence="3">
    <location>
        <begin position="1"/>
        <end position="21"/>
    </location>
</feature>
<feature type="region of interest" description="Disordered" evidence="3">
    <location>
        <begin position="510"/>
        <end position="532"/>
    </location>
</feature>
<feature type="compositionally biased region" description="Low complexity" evidence="3">
    <location>
        <begin position="523"/>
        <end position="532"/>
    </location>
</feature>
<feature type="binding site" evidence="1">
    <location>
        <position position="33"/>
    </location>
    <ligand>
        <name>[4Fe-4S] cluster</name>
        <dbReference type="ChEBI" id="CHEBI:49883"/>
        <label>1</label>
    </ligand>
</feature>
<feature type="binding site" evidence="1">
    <location>
        <position position="69"/>
    </location>
    <ligand>
        <name>[4Fe-4S] cluster</name>
        <dbReference type="ChEBI" id="CHEBI:49883"/>
        <label>1</label>
    </ligand>
</feature>
<feature type="binding site" evidence="1">
    <location>
        <position position="103"/>
    </location>
    <ligand>
        <name>[4Fe-4S] cluster</name>
        <dbReference type="ChEBI" id="CHEBI:49883"/>
        <label>1</label>
    </ligand>
</feature>
<feature type="binding site" evidence="1">
    <location>
        <position position="177"/>
    </location>
    <ligand>
        <name>[4Fe-4S] cluster</name>
        <dbReference type="ChEBI" id="CHEBI:49883"/>
        <label>2</label>
        <note>4Fe-4S-S-AdoMet</note>
    </ligand>
</feature>
<feature type="binding site" evidence="1">
    <location>
        <position position="181"/>
    </location>
    <ligand>
        <name>[4Fe-4S] cluster</name>
        <dbReference type="ChEBI" id="CHEBI:49883"/>
        <label>2</label>
        <note>4Fe-4S-S-AdoMet</note>
    </ligand>
</feature>
<feature type="binding site" evidence="1">
    <location>
        <position position="184"/>
    </location>
    <ligand>
        <name>[4Fe-4S] cluster</name>
        <dbReference type="ChEBI" id="CHEBI:49883"/>
        <label>2</label>
        <note>4Fe-4S-S-AdoMet</note>
    </ligand>
</feature>
<name>MIAB_MYCUA</name>
<evidence type="ECO:0000255" key="1">
    <source>
        <dbReference type="HAMAP-Rule" id="MF_01864"/>
    </source>
</evidence>
<evidence type="ECO:0000255" key="2">
    <source>
        <dbReference type="PROSITE-ProRule" id="PRU01266"/>
    </source>
</evidence>
<evidence type="ECO:0000256" key="3">
    <source>
        <dbReference type="SAM" id="MobiDB-lite"/>
    </source>
</evidence>
<accession>A0PT87</accession>
<sequence>MTSTVAHGAGSAGPADDVEPMSARTYQVRTYGCQMNVHDSERMAGLLEAAGYRRAAEGTDADVVVFNTCAVRENADNKLYGNLSHLAPRKRTSPDMQIAVGGCLAQKDRDALLRKAPWVDVVFGTHNIGSLPALLDRARHNRVAQVEIAEALQQFPSSLPSARESAYAAWVSISVGCNNTCTFCIVPSLRGKEIDRSPADILAEVQSLVDTGVVEITLLGQNVNAYGVSFADPALPRNRGAFAELLRACGDIDGLERVRFTSPHPAEFTDDVIEAMAQTPNVCPALHMPLQSGSDRVLRAMRRSYRAERYLGIIERVRAAMPHAAITTDLIVGFPGETEQDFAATLDVVRQARFSAAFTFQYSKRPGTPAAELDGQLPKAVVQERYERLVELQEQISLEGNRAIVGQRVELLVATGEGRKDTLTARMSGRARDGRLVHFRAGDGPVRPGDIVTVEVTDAAPHHLIADGGILAHRRTRAGDAHADGQTVRGIGLGMPGIGRPVVPVAAEATSCGSAGGCGSADGAGSSAGDPQ</sequence>
<reference key="1">
    <citation type="journal article" date="2007" name="Genome Res.">
        <title>Reductive evolution and niche adaptation inferred from the genome of Mycobacterium ulcerans, the causative agent of Buruli ulcer.</title>
        <authorList>
            <person name="Stinear T.P."/>
            <person name="Seemann T."/>
            <person name="Pidot S."/>
            <person name="Frigui W."/>
            <person name="Reysset G."/>
            <person name="Garnier T."/>
            <person name="Meurice G."/>
            <person name="Simon D."/>
            <person name="Bouchier C."/>
            <person name="Ma L."/>
            <person name="Tichit M."/>
            <person name="Porter J.L."/>
            <person name="Ryan J."/>
            <person name="Johnson P.D.R."/>
            <person name="Davies J.K."/>
            <person name="Jenkin G.A."/>
            <person name="Small P.L.C."/>
            <person name="Jones L.M."/>
            <person name="Tekaia F."/>
            <person name="Laval F."/>
            <person name="Daffe M."/>
            <person name="Parkhill J."/>
            <person name="Cole S.T."/>
        </authorList>
    </citation>
    <scope>NUCLEOTIDE SEQUENCE [LARGE SCALE GENOMIC DNA]</scope>
    <source>
        <strain>Agy99</strain>
    </source>
</reference>
<comment type="function">
    <text evidence="1">Catalyzes the methylthiolation of N6-(dimethylallyl)adenosine (i(6)A), leading to the formation of 2-methylthio-N6-(dimethylallyl)adenosine (ms(2)i(6)A) at position 37 in tRNAs that read codons beginning with uridine.</text>
</comment>
<comment type="catalytic activity">
    <reaction evidence="1">
        <text>N(6)-dimethylallyladenosine(37) in tRNA + (sulfur carrier)-SH + AH2 + 2 S-adenosyl-L-methionine = 2-methylsulfanyl-N(6)-dimethylallyladenosine(37) in tRNA + (sulfur carrier)-H + 5'-deoxyadenosine + L-methionine + A + S-adenosyl-L-homocysteine + 2 H(+)</text>
        <dbReference type="Rhea" id="RHEA:37067"/>
        <dbReference type="Rhea" id="RHEA-COMP:10375"/>
        <dbReference type="Rhea" id="RHEA-COMP:10376"/>
        <dbReference type="Rhea" id="RHEA-COMP:14737"/>
        <dbReference type="Rhea" id="RHEA-COMP:14739"/>
        <dbReference type="ChEBI" id="CHEBI:13193"/>
        <dbReference type="ChEBI" id="CHEBI:15378"/>
        <dbReference type="ChEBI" id="CHEBI:17319"/>
        <dbReference type="ChEBI" id="CHEBI:17499"/>
        <dbReference type="ChEBI" id="CHEBI:29917"/>
        <dbReference type="ChEBI" id="CHEBI:57844"/>
        <dbReference type="ChEBI" id="CHEBI:57856"/>
        <dbReference type="ChEBI" id="CHEBI:59789"/>
        <dbReference type="ChEBI" id="CHEBI:64428"/>
        <dbReference type="ChEBI" id="CHEBI:74415"/>
        <dbReference type="ChEBI" id="CHEBI:74417"/>
        <dbReference type="EC" id="2.8.4.3"/>
    </reaction>
</comment>
<comment type="cofactor">
    <cofactor evidence="1">
        <name>[4Fe-4S] cluster</name>
        <dbReference type="ChEBI" id="CHEBI:49883"/>
    </cofactor>
    <text evidence="1">Binds 2 [4Fe-4S] clusters. One cluster is coordinated with 3 cysteines and an exchangeable S-adenosyl-L-methionine.</text>
</comment>
<comment type="subunit">
    <text evidence="1">Monomer.</text>
</comment>
<comment type="subcellular location">
    <subcellularLocation>
        <location evidence="1">Cytoplasm</location>
    </subcellularLocation>
</comment>
<comment type="similarity">
    <text evidence="1">Belongs to the methylthiotransferase family. MiaB subfamily.</text>
</comment>